<evidence type="ECO:0000255" key="1"/>
<evidence type="ECO:0000256" key="2">
    <source>
        <dbReference type="SAM" id="MobiDB-lite"/>
    </source>
</evidence>
<evidence type="ECO:0000269" key="3">
    <source>
    </source>
</evidence>
<evidence type="ECO:0000303" key="4">
    <source>
    </source>
</evidence>
<evidence type="ECO:0000305" key="5"/>
<evidence type="ECO:0000312" key="6">
    <source>
        <dbReference type="EMBL" id="EAS05799.2"/>
    </source>
</evidence>
<protein>
    <recommendedName>
        <fullName evidence="5">Cilia- and flagella-associated protein 251</fullName>
    </recommendedName>
</protein>
<name>CF251_TETTS</name>
<accession>Q24DE2</accession>
<feature type="chain" id="PRO_0000439532" description="Cilia- and flagella-associated protein 251">
    <location>
        <begin position="1"/>
        <end position="996"/>
    </location>
</feature>
<feature type="repeat" description="WD 1" evidence="1">
    <location>
        <begin position="73"/>
        <end position="114"/>
    </location>
</feature>
<feature type="repeat" description="WD 2" evidence="1">
    <location>
        <begin position="118"/>
        <end position="164"/>
    </location>
</feature>
<feature type="repeat" description="WD 3" evidence="1">
    <location>
        <begin position="168"/>
        <end position="211"/>
    </location>
</feature>
<feature type="repeat" description="WD 4" evidence="1">
    <location>
        <begin position="219"/>
        <end position="258"/>
    </location>
</feature>
<feature type="repeat" description="WD 5" evidence="1">
    <location>
        <begin position="282"/>
        <end position="319"/>
    </location>
</feature>
<feature type="repeat" description="WD 6" evidence="1">
    <location>
        <begin position="399"/>
        <end position="438"/>
    </location>
</feature>
<feature type="repeat" description="WD 7" evidence="1">
    <location>
        <begin position="445"/>
        <end position="485"/>
    </location>
</feature>
<feature type="repeat" description="WD 8" evidence="1">
    <location>
        <begin position="494"/>
        <end position="533"/>
    </location>
</feature>
<feature type="repeat" description="WD 9" evidence="1">
    <location>
        <begin position="547"/>
        <end position="593"/>
    </location>
</feature>
<feature type="repeat" description="WD 10" evidence="1">
    <location>
        <begin position="615"/>
        <end position="658"/>
    </location>
</feature>
<feature type="repeat" description="WD 11" evidence="1">
    <location>
        <begin position="719"/>
        <end position="759"/>
    </location>
</feature>
<feature type="region of interest" description="Disordered" evidence="2">
    <location>
        <begin position="971"/>
        <end position="996"/>
    </location>
</feature>
<sequence length="996" mass="114443">MYQQEEYEVNNEGQEDVSKINALNLKWTLGFNFQLTDGVHNLTNEKRKEIFYPVAHTGVIYDYENNTQRLLQGHCNRITATAYCKFSDIIVTADCGPDSMLVVWDASTGIPKKTIFEPHPNGCQALDISQDGQFIVTLSKEANTDTDVQSLSLWEWNKDDEPCLITNEFDRRIKDYQYFVRFNSDDNTEFATTGKTRIVFWRREGEQKGFNYYSPGNIPSLKVLTQTVFIPDNTQVVTGTTDGHIIVWDISLIIEKVDTPKERRAIKLVDLMNKSKKPDGKKGSNSINILKIQDNYLVIGSSNGSIRFYDFQYRIIAWFEDAIIGSISNISFANTPMIEDNEDEDGFDDERKDKGENEPKFICPDFIVVDLDATITMLNYKLFEELDDEKKKGTTLMKSIVSPIIAMSCRPNSNVIGICCENGYLYEWNFQEKSSVLSILRVFDTDKENIPNCIDYSPDGNWLSVATKSGKIHIFDCKEKQWQNSVLEVSENEQGKPKVNMQVFSSDSKNLATMDADYAVSLFTIDHRQFDVNIPEKEWQFVGKHRIHHSEIKSIAFGESKNENDKKYYRLFSIGADMKMVEYEVLEIDYSKQKEKGQQINYIDRLKLKSIYPIEQETIPTACIWYPINMYKEDVLLTVNEEFKIKLWQFMKDNFKFCKKTCLGPIYGGAINKLLILNQNDAQNDYQDKYLAYSTKEKVVGIIKLPLEGNPNQTMGLIAHPDKITSISCSNDGKHFFSSGSDDYCVNVWSVNVQALEQIFATNPNEDPYPKLLEGGEDGQTHQDLKNFFYYSQIRSKDEHTTKARKLDGKVPLIAIPDMMRSMGYYPTNKEIENMQNEIRFSKYLDPGEQVEELDLNMFLKLFVNHRPVQGIGKSKIAESLNTLTKSLSDSAKEIAEQAKGQSVQPKTYNIDGIGEISLQDLKKILTTEGERMTNEEFDECLKILCGENEDQIPQQINVNNLCEDILGFEDLEGEERDDNIEDQYEDEENEEYDQD</sequence>
<organism>
    <name type="scientific">Tetrahymena thermophila (strain SB210)</name>
    <dbReference type="NCBI Taxonomy" id="312017"/>
    <lineage>
        <taxon>Eukaryota</taxon>
        <taxon>Sar</taxon>
        <taxon>Alveolata</taxon>
        <taxon>Ciliophora</taxon>
        <taxon>Intramacronucleata</taxon>
        <taxon>Oligohymenophorea</taxon>
        <taxon>Hymenostomatida</taxon>
        <taxon>Tetrahymenina</taxon>
        <taxon>Tetrahymenidae</taxon>
        <taxon>Tetrahymena</taxon>
    </lineage>
</organism>
<proteinExistence type="predicted"/>
<keyword id="KW-0966">Cell projection</keyword>
<keyword id="KW-1185">Reference proteome</keyword>
<keyword id="KW-0677">Repeat</keyword>
<keyword id="KW-0853">WD repeat</keyword>
<comment type="function">
    <text evidence="3">As component of a spoke-associated complex, regulates ciliary mobility by mediating a stable and functional assembly of the radial spoke 3 (RS3).</text>
</comment>
<comment type="subcellular location">
    <subcellularLocation>
        <location evidence="3">Cell projection</location>
        <location evidence="3">Cilium</location>
    </subcellularLocation>
</comment>
<comment type="disruption phenotype">
    <text evidence="3">Knockout cells show deficiencies in cell multiplication and ciliary functions. Mutants move with greatly reduced velocities, have disturbed waveform of beating cilia and have stiffer cilia (PubMed:25694453). Mutant cilia lacjk an arch-like density of the radial spoke 3 base (PubMed:25694453).</text>
</comment>
<reference key="1">
    <citation type="journal article" date="2006" name="PLoS Biol.">
        <title>Macronuclear genome sequence of the ciliate Tetrahymena thermophila, a model eukaryote.</title>
        <authorList>
            <person name="Eisen J.A."/>
            <person name="Coyne R.S."/>
            <person name="Wu M."/>
            <person name="Wu D."/>
            <person name="Thiagarajan M."/>
            <person name="Wortman J.R."/>
            <person name="Badger J.H."/>
            <person name="Ren Q."/>
            <person name="Amedeo P."/>
            <person name="Jones K.M."/>
            <person name="Tallon L.J."/>
            <person name="Delcher A.L."/>
            <person name="Salzberg S.L."/>
            <person name="Silva J.C."/>
            <person name="Haas B.J."/>
            <person name="Majoros W.H."/>
            <person name="Farzad M."/>
            <person name="Carlton J.M."/>
            <person name="Smith R.K. Jr."/>
            <person name="Garg J."/>
            <person name="Pearlman R.E."/>
            <person name="Karrer K.M."/>
            <person name="Sun L."/>
            <person name="Manning G."/>
            <person name="Elde N.C."/>
            <person name="Turkewitz A.P."/>
            <person name="Asai D.J."/>
            <person name="Wilkes D.E."/>
            <person name="Wang Y."/>
            <person name="Cai H."/>
            <person name="Collins K."/>
            <person name="Stewart B.A."/>
            <person name="Lee S.R."/>
            <person name="Wilamowska K."/>
            <person name="Weinberg Z."/>
            <person name="Ruzzo W.L."/>
            <person name="Wloga D."/>
            <person name="Gaertig J."/>
            <person name="Frankel J."/>
            <person name="Tsao C.-C."/>
            <person name="Gorovsky M.A."/>
            <person name="Keeling P.J."/>
            <person name="Waller R.F."/>
            <person name="Patron N.J."/>
            <person name="Cherry J.M."/>
            <person name="Stover N.A."/>
            <person name="Krieger C.J."/>
            <person name="del Toro C."/>
            <person name="Ryder H.F."/>
            <person name="Williamson S.C."/>
            <person name="Barbeau R.A."/>
            <person name="Hamilton E.P."/>
            <person name="Orias E."/>
        </authorList>
    </citation>
    <scope>NUCLEOTIDE SEQUENCE [LARGE SCALE GENOMIC DNA]</scope>
    <source>
        <strain>SB210</strain>
    </source>
</reference>
<reference key="2">
    <citation type="journal article" date="2015" name="Mol. Biol. Cell">
        <title>The CSC proteins FAP61 and FAP251 build the basal substructures of radial spoke 3 in cilia.</title>
        <authorList>
            <person name="Urbanska P."/>
            <person name="Song K."/>
            <person name="Joachimiak E."/>
            <person name="Krzemien-Ojak L."/>
            <person name="Koprowski P."/>
            <person name="Hennessey T."/>
            <person name="Jerka-Dziadosz M."/>
            <person name="Fabczak H."/>
            <person name="Gaertig J."/>
            <person name="Nicastro D."/>
            <person name="Wloga D."/>
        </authorList>
    </citation>
    <scope>FUNCTION</scope>
    <scope>DISRUPTION PHENOTYPE</scope>
    <scope>SUBCELLULAR LOCATION</scope>
</reference>
<dbReference type="EMBL" id="GG662329">
    <property type="protein sequence ID" value="EAS05799.2"/>
    <property type="molecule type" value="Genomic_DNA"/>
</dbReference>
<dbReference type="RefSeq" id="XP_001026044.2">
    <property type="nucleotide sequence ID" value="XM_001026044.2"/>
</dbReference>
<dbReference type="SMR" id="Q24DE2"/>
<dbReference type="STRING" id="312017.Q24DE2"/>
<dbReference type="EnsemblProtists" id="EAS05799">
    <property type="protein sequence ID" value="EAS05799"/>
    <property type="gene ID" value="TTHERM_01262850"/>
</dbReference>
<dbReference type="GeneID" id="7835487"/>
<dbReference type="KEGG" id="tet:TTHERM_01262850"/>
<dbReference type="eggNOG" id="ENOG502QQ05">
    <property type="taxonomic scope" value="Eukaryota"/>
</dbReference>
<dbReference type="HOGENOM" id="CLU_007087_1_0_1"/>
<dbReference type="InParanoid" id="Q24DE2"/>
<dbReference type="OrthoDB" id="4899631at2759"/>
<dbReference type="Proteomes" id="UP000009168">
    <property type="component" value="Unassembled WGS sequence"/>
</dbReference>
<dbReference type="GO" id="GO:0097729">
    <property type="term" value="C:9+2 motile cilium"/>
    <property type="evidence" value="ECO:0000314"/>
    <property type="project" value="UniProtKB"/>
</dbReference>
<dbReference type="GO" id="GO:0003341">
    <property type="term" value="P:cilium movement"/>
    <property type="evidence" value="ECO:0000315"/>
    <property type="project" value="UniProtKB"/>
</dbReference>
<dbReference type="GO" id="GO:0044782">
    <property type="term" value="P:cilium organization"/>
    <property type="evidence" value="ECO:0000314"/>
    <property type="project" value="UniProtKB"/>
</dbReference>
<dbReference type="FunFam" id="2.130.10.10:FF:001236">
    <property type="entry name" value="Cilia- and flagella-associated protein 251"/>
    <property type="match status" value="1"/>
</dbReference>
<dbReference type="Gene3D" id="1.10.238.10">
    <property type="entry name" value="EF-hand"/>
    <property type="match status" value="1"/>
</dbReference>
<dbReference type="Gene3D" id="2.130.10.10">
    <property type="entry name" value="YVTN repeat-like/Quinoprotein amine dehydrogenase"/>
    <property type="match status" value="2"/>
</dbReference>
<dbReference type="InterPro" id="IPR011992">
    <property type="entry name" value="EF-hand-dom_pair"/>
</dbReference>
<dbReference type="InterPro" id="IPR011047">
    <property type="entry name" value="Quinoprotein_ADH-like_sf"/>
</dbReference>
<dbReference type="InterPro" id="IPR015943">
    <property type="entry name" value="WD40/YVTN_repeat-like_dom_sf"/>
</dbReference>
<dbReference type="InterPro" id="IPR019775">
    <property type="entry name" value="WD40_repeat_CS"/>
</dbReference>
<dbReference type="InterPro" id="IPR036322">
    <property type="entry name" value="WD40_repeat_dom_sf"/>
</dbReference>
<dbReference type="InterPro" id="IPR001680">
    <property type="entry name" value="WD40_rpt"/>
</dbReference>
<dbReference type="InterPro" id="IPR050630">
    <property type="entry name" value="WD_repeat_EMAP"/>
</dbReference>
<dbReference type="PANTHER" id="PTHR13720:SF13">
    <property type="entry name" value="CILIA- AND FLAGELLA-ASSOCIATED PROTEIN 251"/>
    <property type="match status" value="1"/>
</dbReference>
<dbReference type="PANTHER" id="PTHR13720">
    <property type="entry name" value="WD-40 REPEAT PROTEIN"/>
    <property type="match status" value="1"/>
</dbReference>
<dbReference type="Pfam" id="PF00400">
    <property type="entry name" value="WD40"/>
    <property type="match status" value="3"/>
</dbReference>
<dbReference type="SMART" id="SM00320">
    <property type="entry name" value="WD40"/>
    <property type="match status" value="9"/>
</dbReference>
<dbReference type="SUPFAM" id="SSF47473">
    <property type="entry name" value="EF-hand"/>
    <property type="match status" value="1"/>
</dbReference>
<dbReference type="SUPFAM" id="SSF50998">
    <property type="entry name" value="Quinoprotein alcohol dehydrogenase-like"/>
    <property type="match status" value="1"/>
</dbReference>
<dbReference type="SUPFAM" id="SSF50978">
    <property type="entry name" value="WD40 repeat-like"/>
    <property type="match status" value="1"/>
</dbReference>
<dbReference type="PROSITE" id="PS00599">
    <property type="entry name" value="AA_TRANSFER_CLASS_2"/>
    <property type="match status" value="1"/>
</dbReference>
<dbReference type="PROSITE" id="PS00678">
    <property type="entry name" value="WD_REPEATS_1"/>
    <property type="match status" value="1"/>
</dbReference>
<dbReference type="PROSITE" id="PS50082">
    <property type="entry name" value="WD_REPEATS_2"/>
    <property type="match status" value="2"/>
</dbReference>
<dbReference type="PROSITE" id="PS50294">
    <property type="entry name" value="WD_REPEATS_REGION"/>
    <property type="match status" value="1"/>
</dbReference>
<gene>
    <name evidence="5" type="primary">CFAP251</name>
    <name evidence="4" type="synonym">FAP251</name>
    <name evidence="6" type="ORF">TTHERM_01262850</name>
</gene>